<protein>
    <recommendedName>
        <fullName>Uncharacterized protein YbiJ</fullName>
    </recommendedName>
</protein>
<feature type="signal peptide" evidence="1">
    <location>
        <begin position="1"/>
        <end position="22"/>
    </location>
</feature>
<feature type="chain" id="PRO_0000042564" description="Uncharacterized protein YbiJ">
    <location>
        <begin position="23"/>
        <end position="86"/>
    </location>
</feature>
<dbReference type="EMBL" id="AE014075">
    <property type="protein sequence ID" value="AAN79359.1"/>
    <property type="molecule type" value="Genomic_DNA"/>
</dbReference>
<dbReference type="RefSeq" id="WP_000849301.1">
    <property type="nucleotide sequence ID" value="NZ_CP051263.1"/>
</dbReference>
<dbReference type="SMR" id="P0AAX4"/>
<dbReference type="STRING" id="199310.c0886"/>
<dbReference type="GeneID" id="89520181"/>
<dbReference type="KEGG" id="ecc:c0886"/>
<dbReference type="eggNOG" id="ENOG5032ZBU">
    <property type="taxonomic scope" value="Bacteria"/>
</dbReference>
<dbReference type="HOGENOM" id="CLU_158602_2_2_6"/>
<dbReference type="BioCyc" id="ECOL199310:C0886-MONOMER"/>
<dbReference type="Proteomes" id="UP000001410">
    <property type="component" value="Chromosome"/>
</dbReference>
<dbReference type="GO" id="GO:0042597">
    <property type="term" value="C:periplasmic space"/>
    <property type="evidence" value="ECO:0007669"/>
    <property type="project" value="UniProtKB-SubCell"/>
</dbReference>
<dbReference type="FunFam" id="3.30.1660.10:FF:000001">
    <property type="entry name" value="Multiple stress resistance protein BhsA"/>
    <property type="match status" value="1"/>
</dbReference>
<dbReference type="Gene3D" id="3.30.1660.10">
    <property type="entry name" value="Flavin-binding protein dodecin"/>
    <property type="match status" value="1"/>
</dbReference>
<dbReference type="InterPro" id="IPR051096">
    <property type="entry name" value="BhsA/McbA_stress_biofilm_assoc"/>
</dbReference>
<dbReference type="InterPro" id="IPR025543">
    <property type="entry name" value="Dodecin-like"/>
</dbReference>
<dbReference type="InterPro" id="IPR036275">
    <property type="entry name" value="YdgH-like_sf"/>
</dbReference>
<dbReference type="InterPro" id="IPR010854">
    <property type="entry name" value="YdgH/BhsA/McbA-like_dom"/>
</dbReference>
<dbReference type="NCBIfam" id="NF007611">
    <property type="entry name" value="PRK10259.1"/>
    <property type="match status" value="1"/>
</dbReference>
<dbReference type="NCBIfam" id="NF047859">
    <property type="entry name" value="StressCuResBhsA"/>
    <property type="match status" value="1"/>
</dbReference>
<dbReference type="PANTHER" id="PTHR34156">
    <property type="entry name" value="OUTER MEMBRANE PROTEIN-RELATED-RELATED"/>
    <property type="match status" value="1"/>
</dbReference>
<dbReference type="PANTHER" id="PTHR34156:SF1">
    <property type="entry name" value="PERIPLASMIC PROTEIN"/>
    <property type="match status" value="1"/>
</dbReference>
<dbReference type="Pfam" id="PF07338">
    <property type="entry name" value="YdgH_BhsA-like"/>
    <property type="match status" value="1"/>
</dbReference>
<dbReference type="SUPFAM" id="SSF159871">
    <property type="entry name" value="YdgH-like"/>
    <property type="match status" value="1"/>
</dbReference>
<keyword id="KW-0574">Periplasm</keyword>
<keyword id="KW-1185">Reference proteome</keyword>
<keyword id="KW-0732">Signal</keyword>
<name>YBIJ_ECOL6</name>
<accession>P0AAX4</accession>
<accession>P41038</accession>
<comment type="subcellular location">
    <subcellularLocation>
        <location evidence="2">Periplasm</location>
    </subcellularLocation>
</comment>
<comment type="similarity">
    <text evidence="2">Belongs to the BhsA/McbA family.</text>
</comment>
<sequence length="86" mass="8568">MKTINTVVAAMALSTLSFGVFAAEPVTASQAQNMNKIGVVSADGASTLDALEAKLAEKAAAAGASGYSITSATNNNKLSGTAVIYK</sequence>
<proteinExistence type="inferred from homology"/>
<organism>
    <name type="scientific">Escherichia coli O6:H1 (strain CFT073 / ATCC 700928 / UPEC)</name>
    <dbReference type="NCBI Taxonomy" id="199310"/>
    <lineage>
        <taxon>Bacteria</taxon>
        <taxon>Pseudomonadati</taxon>
        <taxon>Pseudomonadota</taxon>
        <taxon>Gammaproteobacteria</taxon>
        <taxon>Enterobacterales</taxon>
        <taxon>Enterobacteriaceae</taxon>
        <taxon>Escherichia</taxon>
    </lineage>
</organism>
<evidence type="ECO:0000255" key="1"/>
<evidence type="ECO:0000305" key="2"/>
<gene>
    <name type="primary">ybiJ</name>
    <name type="ordered locus">c0886</name>
</gene>
<reference key="1">
    <citation type="journal article" date="2002" name="Proc. Natl. Acad. Sci. U.S.A.">
        <title>Extensive mosaic structure revealed by the complete genome sequence of uropathogenic Escherichia coli.</title>
        <authorList>
            <person name="Welch R.A."/>
            <person name="Burland V."/>
            <person name="Plunkett G. III"/>
            <person name="Redford P."/>
            <person name="Roesch P."/>
            <person name="Rasko D."/>
            <person name="Buckles E.L."/>
            <person name="Liou S.-R."/>
            <person name="Boutin A."/>
            <person name="Hackett J."/>
            <person name="Stroud D."/>
            <person name="Mayhew G.F."/>
            <person name="Rose D.J."/>
            <person name="Zhou S."/>
            <person name="Schwartz D.C."/>
            <person name="Perna N.T."/>
            <person name="Mobley H.L.T."/>
            <person name="Donnenberg M.S."/>
            <person name="Blattner F.R."/>
        </authorList>
    </citation>
    <scope>NUCLEOTIDE SEQUENCE [LARGE SCALE GENOMIC DNA]</scope>
    <source>
        <strain>CFT073 / ATCC 700928 / UPEC</strain>
    </source>
</reference>